<dbReference type="EMBL" id="AF343342">
    <property type="protein sequence ID" value="AAK69656.1"/>
    <property type="molecule type" value="mRNA"/>
</dbReference>
<dbReference type="EMBL" id="AF068297">
    <property type="protein sequence ID" value="AAF65186.1"/>
    <property type="status" value="ALT_INIT"/>
    <property type="molecule type" value="mRNA"/>
</dbReference>
<dbReference type="EMBL" id="AF161425">
    <property type="protein sequence ID" value="AAF28985.1"/>
    <property type="status" value="ALT_INIT"/>
    <property type="molecule type" value="mRNA"/>
</dbReference>
<dbReference type="EMBL" id="AF201937">
    <property type="protein sequence ID" value="AAF86873.1"/>
    <property type="molecule type" value="mRNA"/>
</dbReference>
<dbReference type="EMBL" id="CN430159">
    <property type="status" value="NOT_ANNOTATED_CDS"/>
    <property type="molecule type" value="mRNA"/>
</dbReference>
<dbReference type="EMBL" id="AK312185">
    <property type="protein sequence ID" value="BAG35118.1"/>
    <property type="molecule type" value="mRNA"/>
</dbReference>
<dbReference type="EMBL" id="AC107071">
    <property type="status" value="NOT_ANNOTATED_CDS"/>
    <property type="molecule type" value="Genomic_DNA"/>
</dbReference>
<dbReference type="EMBL" id="CH471057">
    <property type="protein sequence ID" value="EAX06233.1"/>
    <property type="molecule type" value="Genomic_DNA"/>
</dbReference>
<dbReference type="EMBL" id="BC016321">
    <property type="protein sequence ID" value="AAH16321.1"/>
    <property type="molecule type" value="mRNA"/>
</dbReference>
<dbReference type="EMBL" id="BC054857">
    <property type="protein sequence ID" value="AAH54857.1"/>
    <property type="molecule type" value="mRNA"/>
</dbReference>
<dbReference type="CCDS" id="CCDS3681.1">
    <molecule id="Q9NRP0-1"/>
</dbReference>
<dbReference type="CCDS" id="CCDS58921.1">
    <molecule id="Q9NRP0-2"/>
</dbReference>
<dbReference type="RefSeq" id="NP_001254746.1">
    <property type="nucleotide sequence ID" value="NM_001267817.1"/>
</dbReference>
<dbReference type="RefSeq" id="NP_001254747.1">
    <molecule id="Q9NRP0-2"/>
    <property type="nucleotide sequence ID" value="NM_001267818.2"/>
</dbReference>
<dbReference type="RefSeq" id="NP_067050.1">
    <molecule id="Q9NRP0-1"/>
    <property type="nucleotide sequence ID" value="NM_021227.4"/>
</dbReference>
<dbReference type="PDB" id="6S7O">
    <property type="method" value="EM"/>
    <property type="resolution" value="3.50 A"/>
    <property type="chains" value="H=1-149"/>
</dbReference>
<dbReference type="PDB" id="8B6L">
    <property type="method" value="EM"/>
    <property type="resolution" value="7.60 A"/>
    <property type="chains" value="J=1-149"/>
</dbReference>
<dbReference type="PDB" id="8PN9">
    <property type="method" value="EM"/>
    <property type="resolution" value="3.61 A"/>
    <property type="chains" value="H=1-149"/>
</dbReference>
<dbReference type="PDBsum" id="6S7O"/>
<dbReference type="PDBsum" id="8B6L"/>
<dbReference type="PDBsum" id="8PN9"/>
<dbReference type="EMDB" id="EMD-10110"/>
<dbReference type="EMDB" id="EMD-15870"/>
<dbReference type="EMDB" id="EMD-17779"/>
<dbReference type="SMR" id="Q9NRP0"/>
<dbReference type="BioGRID" id="121833">
    <property type="interactions" value="87"/>
</dbReference>
<dbReference type="ComplexPortal" id="CPX-5621">
    <property type="entry name" value="Oligosaccharyltransferase complex A"/>
</dbReference>
<dbReference type="FunCoup" id="Q9NRP0">
    <property type="interactions" value="620"/>
</dbReference>
<dbReference type="IntAct" id="Q9NRP0">
    <property type="interactions" value="43"/>
</dbReference>
<dbReference type="MINT" id="Q9NRP0"/>
<dbReference type="STRING" id="9606.ENSP00000426167"/>
<dbReference type="TCDB" id="1.A.76.2.9">
    <property type="family name" value="the magnesium transporter1 (magt1) family"/>
</dbReference>
<dbReference type="TCDB" id="9.B.142.3.17">
    <property type="family name" value="the integral membrane glycosyltransferase family 39 (gt39) family"/>
</dbReference>
<dbReference type="GlyGen" id="Q9NRP0">
    <property type="glycosylation" value="1 site, 1 O-linked glycan (1 site)"/>
</dbReference>
<dbReference type="iPTMnet" id="Q9NRP0"/>
<dbReference type="PhosphoSitePlus" id="Q9NRP0"/>
<dbReference type="SwissPalm" id="Q9NRP0"/>
<dbReference type="BioMuta" id="OSTC"/>
<dbReference type="DMDM" id="74734324"/>
<dbReference type="jPOST" id="Q9NRP0"/>
<dbReference type="MassIVE" id="Q9NRP0"/>
<dbReference type="PaxDb" id="9606-ENSP00000426167"/>
<dbReference type="PeptideAtlas" id="Q9NRP0"/>
<dbReference type="ProteomicsDB" id="14790"/>
<dbReference type="ProteomicsDB" id="82398">
    <molecule id="Q9NRP0-1"/>
</dbReference>
<dbReference type="Pumba" id="Q9NRP0"/>
<dbReference type="TopDownProteomics" id="Q9NRP0-1">
    <molecule id="Q9NRP0-1"/>
</dbReference>
<dbReference type="Antibodypedia" id="26281">
    <property type="antibodies" value="85 antibodies from 21 providers"/>
</dbReference>
<dbReference type="DNASU" id="58505"/>
<dbReference type="Ensembl" id="ENST00000361564.9">
    <molecule id="Q9NRP0-1"/>
    <property type="protein sequence ID" value="ENSP00000354676.4"/>
    <property type="gene ID" value="ENSG00000198856.13"/>
</dbReference>
<dbReference type="Ensembl" id="ENST00000512478.2">
    <molecule id="Q9NRP0-2"/>
    <property type="protein sequence ID" value="ENSP00000426167.2"/>
    <property type="gene ID" value="ENSG00000198856.13"/>
</dbReference>
<dbReference type="GeneID" id="58505"/>
<dbReference type="KEGG" id="hsa:58505"/>
<dbReference type="MANE-Select" id="ENST00000361564.9">
    <property type="protein sequence ID" value="ENSP00000354676.4"/>
    <property type="RefSeq nucleotide sequence ID" value="NM_021227.4"/>
    <property type="RefSeq protein sequence ID" value="NP_067050.1"/>
</dbReference>
<dbReference type="UCSC" id="uc003hzb.3">
    <molecule id="Q9NRP0-1"/>
    <property type="organism name" value="human"/>
</dbReference>
<dbReference type="AGR" id="HGNC:24448"/>
<dbReference type="CTD" id="58505"/>
<dbReference type="DisGeNET" id="58505"/>
<dbReference type="GeneCards" id="OSTC"/>
<dbReference type="HGNC" id="HGNC:24448">
    <property type="gene designation" value="OSTC"/>
</dbReference>
<dbReference type="HPA" id="ENSG00000198856">
    <property type="expression patterns" value="Low tissue specificity"/>
</dbReference>
<dbReference type="MIM" id="619023">
    <property type="type" value="gene"/>
</dbReference>
<dbReference type="neXtProt" id="NX_Q9NRP0"/>
<dbReference type="OpenTargets" id="ENSG00000198856"/>
<dbReference type="PharmGKB" id="PA164724280"/>
<dbReference type="VEuPathDB" id="HostDB:ENSG00000198856"/>
<dbReference type="eggNOG" id="KOG3356">
    <property type="taxonomic scope" value="Eukaryota"/>
</dbReference>
<dbReference type="GeneTree" id="ENSGT00390000001376"/>
<dbReference type="HOGENOM" id="CLU_109136_1_0_1"/>
<dbReference type="InParanoid" id="Q9NRP0"/>
<dbReference type="OMA" id="CWIFMRM"/>
<dbReference type="OrthoDB" id="10256333at2759"/>
<dbReference type="PAN-GO" id="Q9NRP0">
    <property type="GO annotations" value="1 GO annotation based on evolutionary models"/>
</dbReference>
<dbReference type="PhylomeDB" id="Q9NRP0"/>
<dbReference type="TreeFam" id="TF323315"/>
<dbReference type="BRENDA" id="2.4.99.18">
    <property type="organism ID" value="2681"/>
</dbReference>
<dbReference type="PathwayCommons" id="Q9NRP0"/>
<dbReference type="SignaLink" id="Q9NRP0"/>
<dbReference type="SIGNOR" id="Q9NRP0"/>
<dbReference type="UniPathway" id="UPA00378"/>
<dbReference type="BioGRID-ORCS" id="58505">
    <property type="hits" value="444 hits in 1134 CRISPR screens"/>
</dbReference>
<dbReference type="ChiTaRS" id="OSTC">
    <property type="organism name" value="human"/>
</dbReference>
<dbReference type="GenomeRNAi" id="58505"/>
<dbReference type="Pharos" id="Q9NRP0">
    <property type="development level" value="Tbio"/>
</dbReference>
<dbReference type="PRO" id="PR:Q9NRP0"/>
<dbReference type="Proteomes" id="UP000005640">
    <property type="component" value="Chromosome 4"/>
</dbReference>
<dbReference type="RNAct" id="Q9NRP0">
    <property type="molecule type" value="protein"/>
</dbReference>
<dbReference type="Bgee" id="ENSG00000198856">
    <property type="expression patterns" value="Expressed in stromal cell of endometrium and 182 other cell types or tissues"/>
</dbReference>
<dbReference type="ExpressionAtlas" id="Q9NRP0">
    <property type="expression patterns" value="baseline and differential"/>
</dbReference>
<dbReference type="GO" id="GO:0005789">
    <property type="term" value="C:endoplasmic reticulum membrane"/>
    <property type="evidence" value="ECO:0000303"/>
    <property type="project" value="ComplexPortal"/>
</dbReference>
<dbReference type="GO" id="GO:0008250">
    <property type="term" value="C:oligosaccharyltransferase complex"/>
    <property type="evidence" value="ECO:0000314"/>
    <property type="project" value="UniProtKB"/>
</dbReference>
<dbReference type="GO" id="GO:0160226">
    <property type="term" value="C:oligosaccharyltransferase complex A"/>
    <property type="evidence" value="ECO:0000314"/>
    <property type="project" value="UniProtKB"/>
</dbReference>
<dbReference type="GO" id="GO:0030674">
    <property type="term" value="F:protein-macromolecule adaptor activity"/>
    <property type="evidence" value="ECO:0000314"/>
    <property type="project" value="UniProtKB"/>
</dbReference>
<dbReference type="GO" id="GO:0043686">
    <property type="term" value="P:co-translational protein modification"/>
    <property type="evidence" value="ECO:0000314"/>
    <property type="project" value="UniProtKB"/>
</dbReference>
<dbReference type="GO" id="GO:0006487">
    <property type="term" value="P:protein N-linked glycosylation"/>
    <property type="evidence" value="ECO:0000303"/>
    <property type="project" value="ComplexPortal"/>
</dbReference>
<dbReference type="GO" id="GO:0018279">
    <property type="term" value="P:protein N-linked glycosylation via asparagine"/>
    <property type="evidence" value="ECO:0000314"/>
    <property type="project" value="UniProtKB"/>
</dbReference>
<dbReference type="InterPro" id="IPR021149">
    <property type="entry name" value="OligosaccharylTrfase_OST3/OST6"/>
</dbReference>
<dbReference type="InterPro" id="IPR042416">
    <property type="entry name" value="OSTC"/>
</dbReference>
<dbReference type="PANTHER" id="PTHR13160">
    <property type="entry name" value="OLIGOSACCHARYLTRANSFERASE COMPLEX SUBUNIT OSTC"/>
    <property type="match status" value="1"/>
</dbReference>
<dbReference type="PANTHER" id="PTHR13160:SF9">
    <property type="entry name" value="OLIGOSACCHARYLTRANSFERASE COMPLEX SUBUNIT OSTC"/>
    <property type="match status" value="1"/>
</dbReference>
<dbReference type="Pfam" id="PF04756">
    <property type="entry name" value="OST3_OST6"/>
    <property type="match status" value="1"/>
</dbReference>
<sequence>METLYRVPFLVLECPNLKLKKPPWLHMPSAMTVYALVVVSYFLITGGIIYDVIVEPPSVGSMTDEHGHQRPVAFLAYRVNGQYIMEGLASSFLFTMGGLGFIILDRSNAPNIPKLNRFLLLFIGFVCVLLSFFMARVFMRMKLPGYLMG</sequence>
<reference key="1">
    <citation type="submission" date="2001-01" db="EMBL/GenBank/DDBJ databases">
        <authorList>
            <person name="Favier A.-L."/>
            <person name="Harsi C."/>
            <person name="Chrobozcek J."/>
        </authorList>
    </citation>
    <scope>NUCLEOTIDE SEQUENCE [MRNA] (ISOFORM 1)</scope>
    <source>
        <tissue>Kidney</tissue>
    </source>
</reference>
<reference key="2">
    <citation type="submission" date="1998-05" db="EMBL/GenBank/DDBJ databases">
        <title>A novel gene from human dendritic cell.</title>
        <authorList>
            <person name="Zhao Z."/>
            <person name="Huang X."/>
            <person name="Li N."/>
            <person name="Zhu X."/>
            <person name="Cao X."/>
        </authorList>
    </citation>
    <scope>NUCLEOTIDE SEQUENCE [LARGE SCALE MRNA] (ISOFORM 1)</scope>
    <source>
        <tissue>Dendritic cell</tissue>
    </source>
</reference>
<reference key="3">
    <citation type="submission" date="1999-05" db="EMBL/GenBank/DDBJ databases">
        <title>Human partial CDS from CD34+ stem cells.</title>
        <authorList>
            <person name="Ye M."/>
            <person name="Zhang Q.-H."/>
            <person name="Zhou J."/>
            <person name="Shen Y."/>
            <person name="Wu X.-Y."/>
            <person name="Guan Z.Q."/>
            <person name="Wang L."/>
            <person name="Fan H.-Y."/>
            <person name="Mao Y.-F."/>
            <person name="Dai M."/>
            <person name="Huang Q.-H."/>
            <person name="Chen S.-J."/>
            <person name="Chen Z."/>
        </authorList>
    </citation>
    <scope>NUCLEOTIDE SEQUENCE [LARGE SCALE MRNA] (ISOFORM 1)</scope>
    <source>
        <tissue>Umbilical cord blood</tissue>
    </source>
</reference>
<reference key="4">
    <citation type="submission" date="1999-11" db="EMBL/GenBank/DDBJ databases">
        <title>Novel genes expressed in human dendritic cell.</title>
        <authorList>
            <person name="Peng Y."/>
            <person name="Li Y."/>
            <person name="Li N."/>
            <person name="Gu W."/>
            <person name="Han Z."/>
            <person name="Fu G."/>
            <person name="Chen Z."/>
        </authorList>
    </citation>
    <scope>NUCLEOTIDE SEQUENCE [LARGE SCALE MRNA] (ISOFORM 1)</scope>
    <source>
        <tissue>Dendritic cell</tissue>
    </source>
</reference>
<reference key="5">
    <citation type="journal article" date="2004" name="Nat. Biotechnol.">
        <title>Transcriptome characterization elucidates signaling networks that control human ES cell growth and differentiation.</title>
        <authorList>
            <person name="Brandenberger R."/>
            <person name="Wei H."/>
            <person name="Zhang S."/>
            <person name="Lei S."/>
            <person name="Murage J."/>
            <person name="Fisk G.J."/>
            <person name="Li Y."/>
            <person name="Xu C."/>
            <person name="Fang R."/>
            <person name="Guegler K."/>
            <person name="Rao M.S."/>
            <person name="Mandalam R."/>
            <person name="Lebkowski J."/>
            <person name="Stanton L.W."/>
        </authorList>
    </citation>
    <scope>NUCLEOTIDE SEQUENCE [LARGE SCALE MRNA] (ISOFORM 2)</scope>
</reference>
<reference key="6">
    <citation type="journal article" date="2004" name="Nat. Genet.">
        <title>Complete sequencing and characterization of 21,243 full-length human cDNAs.</title>
        <authorList>
            <person name="Ota T."/>
            <person name="Suzuki Y."/>
            <person name="Nishikawa T."/>
            <person name="Otsuki T."/>
            <person name="Sugiyama T."/>
            <person name="Irie R."/>
            <person name="Wakamatsu A."/>
            <person name="Hayashi K."/>
            <person name="Sato H."/>
            <person name="Nagai K."/>
            <person name="Kimura K."/>
            <person name="Makita H."/>
            <person name="Sekine M."/>
            <person name="Obayashi M."/>
            <person name="Nishi T."/>
            <person name="Shibahara T."/>
            <person name="Tanaka T."/>
            <person name="Ishii S."/>
            <person name="Yamamoto J."/>
            <person name="Saito K."/>
            <person name="Kawai Y."/>
            <person name="Isono Y."/>
            <person name="Nakamura Y."/>
            <person name="Nagahari K."/>
            <person name="Murakami K."/>
            <person name="Yasuda T."/>
            <person name="Iwayanagi T."/>
            <person name="Wagatsuma M."/>
            <person name="Shiratori A."/>
            <person name="Sudo H."/>
            <person name="Hosoiri T."/>
            <person name="Kaku Y."/>
            <person name="Kodaira H."/>
            <person name="Kondo H."/>
            <person name="Sugawara M."/>
            <person name="Takahashi M."/>
            <person name="Kanda K."/>
            <person name="Yokoi T."/>
            <person name="Furuya T."/>
            <person name="Kikkawa E."/>
            <person name="Omura Y."/>
            <person name="Abe K."/>
            <person name="Kamihara K."/>
            <person name="Katsuta N."/>
            <person name="Sato K."/>
            <person name="Tanikawa M."/>
            <person name="Yamazaki M."/>
            <person name="Ninomiya K."/>
            <person name="Ishibashi T."/>
            <person name="Yamashita H."/>
            <person name="Murakawa K."/>
            <person name="Fujimori K."/>
            <person name="Tanai H."/>
            <person name="Kimata M."/>
            <person name="Watanabe M."/>
            <person name="Hiraoka S."/>
            <person name="Chiba Y."/>
            <person name="Ishida S."/>
            <person name="Ono Y."/>
            <person name="Takiguchi S."/>
            <person name="Watanabe S."/>
            <person name="Yosida M."/>
            <person name="Hotuta T."/>
            <person name="Kusano J."/>
            <person name="Kanehori K."/>
            <person name="Takahashi-Fujii A."/>
            <person name="Hara H."/>
            <person name="Tanase T.-O."/>
            <person name="Nomura Y."/>
            <person name="Togiya S."/>
            <person name="Komai F."/>
            <person name="Hara R."/>
            <person name="Takeuchi K."/>
            <person name="Arita M."/>
            <person name="Imose N."/>
            <person name="Musashino K."/>
            <person name="Yuuki H."/>
            <person name="Oshima A."/>
            <person name="Sasaki N."/>
            <person name="Aotsuka S."/>
            <person name="Yoshikawa Y."/>
            <person name="Matsunawa H."/>
            <person name="Ichihara T."/>
            <person name="Shiohata N."/>
            <person name="Sano S."/>
            <person name="Moriya S."/>
            <person name="Momiyama H."/>
            <person name="Satoh N."/>
            <person name="Takami S."/>
            <person name="Terashima Y."/>
            <person name="Suzuki O."/>
            <person name="Nakagawa S."/>
            <person name="Senoh A."/>
            <person name="Mizoguchi H."/>
            <person name="Goto Y."/>
            <person name="Shimizu F."/>
            <person name="Wakebe H."/>
            <person name="Hishigaki H."/>
            <person name="Watanabe T."/>
            <person name="Sugiyama A."/>
            <person name="Takemoto M."/>
            <person name="Kawakami B."/>
            <person name="Yamazaki M."/>
            <person name="Watanabe K."/>
            <person name="Kumagai A."/>
            <person name="Itakura S."/>
            <person name="Fukuzumi Y."/>
            <person name="Fujimori Y."/>
            <person name="Komiyama M."/>
            <person name="Tashiro H."/>
            <person name="Tanigami A."/>
            <person name="Fujiwara T."/>
            <person name="Ono T."/>
            <person name="Yamada K."/>
            <person name="Fujii Y."/>
            <person name="Ozaki K."/>
            <person name="Hirao M."/>
            <person name="Ohmori Y."/>
            <person name="Kawabata A."/>
            <person name="Hikiji T."/>
            <person name="Kobatake N."/>
            <person name="Inagaki H."/>
            <person name="Ikema Y."/>
            <person name="Okamoto S."/>
            <person name="Okitani R."/>
            <person name="Kawakami T."/>
            <person name="Noguchi S."/>
            <person name="Itoh T."/>
            <person name="Shigeta K."/>
            <person name="Senba T."/>
            <person name="Matsumura K."/>
            <person name="Nakajima Y."/>
            <person name="Mizuno T."/>
            <person name="Morinaga M."/>
            <person name="Sasaki M."/>
            <person name="Togashi T."/>
            <person name="Oyama M."/>
            <person name="Hata H."/>
            <person name="Watanabe M."/>
            <person name="Komatsu T."/>
            <person name="Mizushima-Sugano J."/>
            <person name="Satoh T."/>
            <person name="Shirai Y."/>
            <person name="Takahashi Y."/>
            <person name="Nakagawa K."/>
            <person name="Okumura K."/>
            <person name="Nagase T."/>
            <person name="Nomura N."/>
            <person name="Kikuchi H."/>
            <person name="Masuho Y."/>
            <person name="Yamashita R."/>
            <person name="Nakai K."/>
            <person name="Yada T."/>
            <person name="Nakamura Y."/>
            <person name="Ohara O."/>
            <person name="Isogai T."/>
            <person name="Sugano S."/>
        </authorList>
    </citation>
    <scope>NUCLEOTIDE SEQUENCE [LARGE SCALE MRNA] (ISOFORM 1)</scope>
    <source>
        <tissue>Mesangial cell</tissue>
    </source>
</reference>
<reference key="7">
    <citation type="journal article" date="2005" name="Nature">
        <title>Generation and annotation of the DNA sequences of human chromosomes 2 and 4.</title>
        <authorList>
            <person name="Hillier L.W."/>
            <person name="Graves T.A."/>
            <person name="Fulton R.S."/>
            <person name="Fulton L.A."/>
            <person name="Pepin K.H."/>
            <person name="Minx P."/>
            <person name="Wagner-McPherson C."/>
            <person name="Layman D."/>
            <person name="Wylie K."/>
            <person name="Sekhon M."/>
            <person name="Becker M.C."/>
            <person name="Fewell G.A."/>
            <person name="Delehaunty K.D."/>
            <person name="Miner T.L."/>
            <person name="Nash W.E."/>
            <person name="Kremitzki C."/>
            <person name="Oddy L."/>
            <person name="Du H."/>
            <person name="Sun H."/>
            <person name="Bradshaw-Cordum H."/>
            <person name="Ali J."/>
            <person name="Carter J."/>
            <person name="Cordes M."/>
            <person name="Harris A."/>
            <person name="Isak A."/>
            <person name="van Brunt A."/>
            <person name="Nguyen C."/>
            <person name="Du F."/>
            <person name="Courtney L."/>
            <person name="Kalicki J."/>
            <person name="Ozersky P."/>
            <person name="Abbott S."/>
            <person name="Armstrong J."/>
            <person name="Belter E.A."/>
            <person name="Caruso L."/>
            <person name="Cedroni M."/>
            <person name="Cotton M."/>
            <person name="Davidson T."/>
            <person name="Desai A."/>
            <person name="Elliott G."/>
            <person name="Erb T."/>
            <person name="Fronick C."/>
            <person name="Gaige T."/>
            <person name="Haakenson W."/>
            <person name="Haglund K."/>
            <person name="Holmes A."/>
            <person name="Harkins R."/>
            <person name="Kim K."/>
            <person name="Kruchowski S.S."/>
            <person name="Strong C.M."/>
            <person name="Grewal N."/>
            <person name="Goyea E."/>
            <person name="Hou S."/>
            <person name="Levy A."/>
            <person name="Martinka S."/>
            <person name="Mead K."/>
            <person name="McLellan M.D."/>
            <person name="Meyer R."/>
            <person name="Randall-Maher J."/>
            <person name="Tomlinson C."/>
            <person name="Dauphin-Kohlberg S."/>
            <person name="Kozlowicz-Reilly A."/>
            <person name="Shah N."/>
            <person name="Swearengen-Shahid S."/>
            <person name="Snider J."/>
            <person name="Strong J.T."/>
            <person name="Thompson J."/>
            <person name="Yoakum M."/>
            <person name="Leonard S."/>
            <person name="Pearman C."/>
            <person name="Trani L."/>
            <person name="Radionenko M."/>
            <person name="Waligorski J.E."/>
            <person name="Wang C."/>
            <person name="Rock S.M."/>
            <person name="Tin-Wollam A.-M."/>
            <person name="Maupin R."/>
            <person name="Latreille P."/>
            <person name="Wendl M.C."/>
            <person name="Yang S.-P."/>
            <person name="Pohl C."/>
            <person name="Wallis J.W."/>
            <person name="Spieth J."/>
            <person name="Bieri T.A."/>
            <person name="Berkowicz N."/>
            <person name="Nelson J.O."/>
            <person name="Osborne J."/>
            <person name="Ding L."/>
            <person name="Meyer R."/>
            <person name="Sabo A."/>
            <person name="Shotland Y."/>
            <person name="Sinha P."/>
            <person name="Wohldmann P.E."/>
            <person name="Cook L.L."/>
            <person name="Hickenbotham M.T."/>
            <person name="Eldred J."/>
            <person name="Williams D."/>
            <person name="Jones T.A."/>
            <person name="She X."/>
            <person name="Ciccarelli F.D."/>
            <person name="Izaurralde E."/>
            <person name="Taylor J."/>
            <person name="Schmutz J."/>
            <person name="Myers R.M."/>
            <person name="Cox D.R."/>
            <person name="Huang X."/>
            <person name="McPherson J.D."/>
            <person name="Mardis E.R."/>
            <person name="Clifton S.W."/>
            <person name="Warren W.C."/>
            <person name="Chinwalla A.T."/>
            <person name="Eddy S.R."/>
            <person name="Marra M.A."/>
            <person name="Ovcharenko I."/>
            <person name="Furey T.S."/>
            <person name="Miller W."/>
            <person name="Eichler E.E."/>
            <person name="Bork P."/>
            <person name="Suyama M."/>
            <person name="Torrents D."/>
            <person name="Waterston R.H."/>
            <person name="Wilson R.K."/>
        </authorList>
    </citation>
    <scope>NUCLEOTIDE SEQUENCE [LARGE SCALE GENOMIC DNA]</scope>
</reference>
<reference key="8">
    <citation type="submission" date="2005-07" db="EMBL/GenBank/DDBJ databases">
        <authorList>
            <person name="Mural R.J."/>
            <person name="Istrail S."/>
            <person name="Sutton G.G."/>
            <person name="Florea L."/>
            <person name="Halpern A.L."/>
            <person name="Mobarry C.M."/>
            <person name="Lippert R."/>
            <person name="Walenz B."/>
            <person name="Shatkay H."/>
            <person name="Dew I."/>
            <person name="Miller J.R."/>
            <person name="Flanigan M.J."/>
            <person name="Edwards N.J."/>
            <person name="Bolanos R."/>
            <person name="Fasulo D."/>
            <person name="Halldorsson B.V."/>
            <person name="Hannenhalli S."/>
            <person name="Turner R."/>
            <person name="Yooseph S."/>
            <person name="Lu F."/>
            <person name="Nusskern D.R."/>
            <person name="Shue B.C."/>
            <person name="Zheng X.H."/>
            <person name="Zhong F."/>
            <person name="Delcher A.L."/>
            <person name="Huson D.H."/>
            <person name="Kravitz S.A."/>
            <person name="Mouchard L."/>
            <person name="Reinert K."/>
            <person name="Remington K.A."/>
            <person name="Clark A.G."/>
            <person name="Waterman M.S."/>
            <person name="Eichler E.E."/>
            <person name="Adams M.D."/>
            <person name="Hunkapiller M.W."/>
            <person name="Myers E.W."/>
            <person name="Venter J.C."/>
        </authorList>
    </citation>
    <scope>NUCLEOTIDE SEQUENCE [LARGE SCALE GENOMIC DNA]</scope>
</reference>
<reference key="9">
    <citation type="journal article" date="2004" name="Genome Res.">
        <title>The status, quality, and expansion of the NIH full-length cDNA project: the Mammalian Gene Collection (MGC).</title>
        <authorList>
            <consortium name="The MGC Project Team"/>
        </authorList>
    </citation>
    <scope>NUCLEOTIDE SEQUENCE [LARGE SCALE MRNA] (ISOFORM 1)</scope>
    <source>
        <tissue>Brain</tissue>
        <tissue>Urinary bladder</tissue>
    </source>
</reference>
<reference key="10">
    <citation type="journal article" date="2011" name="BMC Syst. Biol.">
        <title>Initial characterization of the human central proteome.</title>
        <authorList>
            <person name="Burkard T.R."/>
            <person name="Planyavsky M."/>
            <person name="Kaupe I."/>
            <person name="Breitwieser F.P."/>
            <person name="Buerckstuemmer T."/>
            <person name="Bennett K.L."/>
            <person name="Superti-Furga G."/>
            <person name="Colinge J."/>
        </authorList>
    </citation>
    <scope>IDENTIFICATION BY MASS SPECTROMETRY [LARGE SCALE ANALYSIS]</scope>
</reference>
<reference key="11">
    <citation type="journal article" date="2011" name="J. Biol. Chem.">
        <title>DC2 and keratinocyte-associated protein 2 (KCP2), subunits of the oligosaccharyltransferase complex, are regulators of the gamma-secretase-directed processing of amyloid precursor protein (APP).</title>
        <authorList>
            <person name="Wilson C.M."/>
            <person name="Magnaudeix A."/>
            <person name="Yardin C."/>
            <person name="Terro F."/>
        </authorList>
    </citation>
    <scope>FUNCTION</scope>
    <scope>SUBCELLULAR LOCATION</scope>
    <scope>INTERACTION WITH PSEN1 AND NCSTN</scope>
</reference>
<reference key="12">
    <citation type="journal article" date="2015" name="Proteomics">
        <title>N-terminome analysis of the human mitochondrial proteome.</title>
        <authorList>
            <person name="Vaca Jacome A.S."/>
            <person name="Rabilloud T."/>
            <person name="Schaeffer-Reiss C."/>
            <person name="Rompais M."/>
            <person name="Ayoub D."/>
            <person name="Lane L."/>
            <person name="Bairoch A."/>
            <person name="Van Dorsselaer A."/>
            <person name="Carapito C."/>
        </authorList>
    </citation>
    <scope>IDENTIFICATION BY MASS SPECTROMETRY [LARGE SCALE ANALYSIS]</scope>
</reference>
<reference key="13">
    <citation type="journal article" date="2017" name="J. Cell Biol.">
        <title>DC2 and KCP2 mediate the interaction between the oligosaccharyltransferase and the ER translocon.</title>
        <authorList>
            <person name="Shrimal S."/>
            <person name="Cherepanova N.A."/>
            <person name="Gilmore R."/>
        </authorList>
    </citation>
    <scope>FUNCTION</scope>
    <scope>SUBUNIT</scope>
    <scope>PATHWAY</scope>
</reference>
<reference key="14">
    <citation type="journal article" date="2024" name="Science">
        <title>Regulated N-glycosylation controls chaperone function and receptor trafficking.</title>
        <authorList>
            <person name="Ma M."/>
            <person name="Dubey R."/>
            <person name="Jen A."/>
            <person name="Pusapati G.V."/>
            <person name="Singal B."/>
            <person name="Shishkova E."/>
            <person name="Overmyer K.A."/>
            <person name="Cormier-Daire V."/>
            <person name="Fedry J."/>
            <person name="Aravind L."/>
            <person name="Coon J.J."/>
            <person name="Rohatgi R."/>
        </authorList>
    </citation>
    <scope>FUNCTION</scope>
    <scope>SUBUNIT</scope>
    <scope>PATHWAY</scope>
</reference>
<reference evidence="12" key="15">
    <citation type="journal article" date="2019" name="Science">
        <title>Cryo-electron microscopy structures of human oligosaccharyltransferase complexes OST-A and OST-B.</title>
        <authorList>
            <person name="Ramirez A.S."/>
            <person name="Kowal J."/>
            <person name="Locher K.P."/>
        </authorList>
    </citation>
    <scope>STRUCTURE BY ELECTRON MICROSCOPY (3.50 ANGSTROMS)</scope>
    <scope>IDENTIFICATION AS COMPONENT OF THE STT3A-CONTAINING OLIGOSACCHARYLTRANSFERASE (OST) COMPLEX</scope>
    <scope>FUNCTION</scope>
    <scope>PATHWAY</scope>
</reference>
<reference evidence="13" key="16">
    <citation type="journal article" date="2023" name="Nature">
        <title>Visualization of translation and protein biogenesis at the ER membrane.</title>
        <authorList>
            <person name="Gemmer M."/>
            <person name="Chaillet M.L."/>
            <person name="van Loenhout J."/>
            <person name="Cuevas Arenas R."/>
            <person name="Vismpas D."/>
            <person name="Grollers-Mulderij M."/>
            <person name="Koh F.A."/>
            <person name="Albanese P."/>
            <person name="Scheltema R.A."/>
            <person name="Howes S.C."/>
            <person name="Kotecha A."/>
            <person name="Fedry J."/>
            <person name="Forster F."/>
        </authorList>
    </citation>
    <scope>STRUCTURE BY ELECTRON MICROSCOPY (7.60 ANGSTROMS) OF THE STT3A-CONTAINING OLIGOSACCHARYLTRANSFERASE (OST) AND TRANSLOCON COMPLEXES</scope>
    <scope>SUBUNIT</scope>
</reference>
<reference evidence="14" key="17">
    <citation type="journal article" date="2024" name="Cell">
        <title>Positive selection CRISPR screens reveal a druggable pocket in an oligosaccharyltransferase required for inflammatory signaling to NF-kappaB.</title>
        <authorList>
            <person name="Lampson B.L."/>
            <person name="Ramrez A.S."/>
            <person name="Baro M."/>
            <person name="He L."/>
            <person name="Hegde M."/>
            <person name="Koduri V."/>
            <person name="Pfaff J.L."/>
            <person name="Hanna R.E."/>
            <person name="Kowal J."/>
            <person name="Shirole N.H."/>
            <person name="He Y."/>
            <person name="Doench J.G."/>
            <person name="Contessa J.N."/>
            <person name="Locher K.P."/>
            <person name="Kaelin W.G."/>
        </authorList>
    </citation>
    <scope>STRUCTURE BY ELECTRON MICROSCOPY (3.61 ANGSTROMS) OF THE STT3A-CONTAINING OLIGOSACCHARYLTRANSFERASE (OST)</scope>
    <scope>SUBUNIT</scope>
</reference>
<reference key="18">
    <citation type="journal article" date="2006" name="Science">
        <title>The consensus coding sequences of human breast and colorectal cancers.</title>
        <authorList>
            <person name="Sjoeblom T."/>
            <person name="Jones S."/>
            <person name="Wood L.D."/>
            <person name="Parsons D.W."/>
            <person name="Lin J."/>
            <person name="Barber T.D."/>
            <person name="Mandelker D."/>
            <person name="Leary R.J."/>
            <person name="Ptak J."/>
            <person name="Silliman N."/>
            <person name="Szabo S."/>
            <person name="Buckhaults P."/>
            <person name="Farrell C."/>
            <person name="Meeh P."/>
            <person name="Markowitz S.D."/>
            <person name="Willis J."/>
            <person name="Dawson D."/>
            <person name="Willson J.K.V."/>
            <person name="Gazdar A.F."/>
            <person name="Hartigan J."/>
            <person name="Wu L."/>
            <person name="Liu C."/>
            <person name="Parmigiani G."/>
            <person name="Park B.H."/>
            <person name="Bachman K.E."/>
            <person name="Papadopoulos N."/>
            <person name="Vogelstein B."/>
            <person name="Kinzler K.W."/>
            <person name="Velculescu V.E."/>
        </authorList>
    </citation>
    <scope>VARIANT [LARGE SCALE ANALYSIS] LEU-9</scope>
</reference>
<proteinExistence type="evidence at protein level"/>
<comment type="function">
    <text evidence="3 4 5 8">Subunit of STT3A-containing oligosaccharyl transferase (OST-A) complex that catalyzes the initial transfer of a defined glycan (Glc(3)Man(9)GlcNAc(2) in eukaryotes) from the lipid carrier dolichol-pyrophosphate to an asparagine residue within an Asn-X-Ser/Thr consensus motif in nascent polypeptide chains, the first step in protein N-glycosylation (PubMed:28860277, PubMed:31831667, PubMed:39509507). N-glycosylation occurs cotranslationally and the complex associates with the Sec61 complex at the channel-forming translocon complex that mediates protein translocation across the endoplasmic reticulum (ER) (PubMed:28860277, PubMed:31831667, PubMed:39509507). Within the OST-A complex, acts as an adapter that anchors the OST-A complex to the Sec61 complex (PubMed:28860277). May be involved in N-glycosylation of APP (amyloid-beta precursor protein) (PubMed:21768116). Can modulate gamma-secretase cleavage of APP by enhancing endoprotelysis of PSEN1 (PubMed:21768116).</text>
</comment>
<comment type="pathway">
    <text evidence="4 5 8">Protein modification; protein glycosylation.</text>
</comment>
<comment type="subunit">
    <text evidence="3 4 5 6 7 8">Component of STT3A-containing oligosaccharyl transferase (OST-A) complex (PubMed:21768116, PubMed:28860277, PubMed:31831667, PubMed:36697828, PubMed:38670073, PubMed:39509507). STT3A-containing complex assembly occurs through the formation of 3 subcomplexes. Subcomplex 1 contains RPN1 and TMEM258, subcomplex 2 contains the STT3A-specific subunits STT3A, DC2/OSTC, and KCP2 as well as the core subunit OST4, and subcomplex 3 contains RPN2, DAD1, and OST48 (PubMed:31831667, PubMed:36697828, PubMed:38670073). The OST-A complex can form stable complexes with the Sec61 complex or with both the Sec61 and TRAP complexes (PubMed:31831667). Interacts with PSEN1 and NCSTN; indicative for an association with the gamma-secretase complex (PubMed:21768116).</text>
</comment>
<comment type="interaction">
    <interactant intactId="EBI-1044658">
        <id>Q9NRP0</id>
    </interactant>
    <interactant intactId="EBI-529425">
        <id>Q92838</id>
        <label>EDA</label>
    </interactant>
    <organismsDiffer>false</organismsDiffer>
    <experiments>3</experiments>
</comment>
<comment type="interaction">
    <interactant intactId="EBI-1044658">
        <id>Q9NRP0</id>
    </interactant>
    <interactant intactId="EBI-11988865">
        <id>A5PKU2</id>
        <label>TUSC5</label>
    </interactant>
    <organismsDiffer>false</organismsDiffer>
    <experiments>3</experiments>
</comment>
<comment type="subcellular location">
    <subcellularLocation>
        <location evidence="3">Endoplasmic reticulum</location>
    </subcellularLocation>
    <subcellularLocation>
        <location evidence="10">Membrane</location>
        <topology evidence="10">Multi-pass membrane protein</topology>
    </subcellularLocation>
</comment>
<comment type="alternative products">
    <event type="alternative splicing"/>
    <isoform>
        <id>Q9NRP0-1</id>
        <name>1</name>
        <sequence type="displayed"/>
    </isoform>
    <isoform>
        <id>Q9NRP0-2</id>
        <name>2</name>
        <sequence type="described" ref="VSP_047376"/>
    </isoform>
</comment>
<comment type="similarity">
    <text evidence="10">Belongs to the OSTC family.</text>
</comment>
<comment type="sequence caution" evidence="10">
    <conflict type="erroneous initiation">
        <sequence resource="EMBL-CDS" id="AAF28985"/>
    </conflict>
</comment>
<comment type="sequence caution" evidence="10">
    <conflict type="erroneous initiation">
        <sequence resource="EMBL-CDS" id="AAF65186"/>
    </conflict>
</comment>
<comment type="sequence caution" evidence="10">
    <conflict type="frameshift">
        <sequence resource="EMBL" id="CN430159"/>
    </conflict>
</comment>
<name>OSTC_HUMAN</name>
<organism>
    <name type="scientific">Homo sapiens</name>
    <name type="common">Human</name>
    <dbReference type="NCBI Taxonomy" id="9606"/>
    <lineage>
        <taxon>Eukaryota</taxon>
        <taxon>Metazoa</taxon>
        <taxon>Chordata</taxon>
        <taxon>Craniata</taxon>
        <taxon>Vertebrata</taxon>
        <taxon>Euteleostomi</taxon>
        <taxon>Mammalia</taxon>
        <taxon>Eutheria</taxon>
        <taxon>Euarchontoglires</taxon>
        <taxon>Primates</taxon>
        <taxon>Haplorrhini</taxon>
        <taxon>Catarrhini</taxon>
        <taxon>Hominidae</taxon>
        <taxon>Homo</taxon>
    </lineage>
</organism>
<feature type="chain" id="PRO_0000320602" description="Oligosaccharyltransferase complex subunit OSTC">
    <location>
        <begin position="1"/>
        <end position="149"/>
    </location>
</feature>
<feature type="topological domain" description="Cytoplasmic" evidence="1">
    <location>
        <begin position="1"/>
        <end position="32"/>
    </location>
</feature>
<feature type="transmembrane region" description="Helical" evidence="1">
    <location>
        <begin position="33"/>
        <end position="53"/>
    </location>
</feature>
<feature type="topological domain" description="Extracellular" evidence="1">
    <location>
        <begin position="54"/>
        <end position="83"/>
    </location>
</feature>
<feature type="transmembrane region" description="Helical" evidence="1">
    <location>
        <begin position="84"/>
        <end position="104"/>
    </location>
</feature>
<feature type="topological domain" description="Cytoplasmic" evidence="1">
    <location>
        <begin position="105"/>
        <end position="117"/>
    </location>
</feature>
<feature type="transmembrane region" description="Helical" evidence="1">
    <location>
        <begin position="118"/>
        <end position="138"/>
    </location>
</feature>
<feature type="topological domain" description="Extracellular" evidence="1">
    <location>
        <begin position="139"/>
        <end position="149"/>
    </location>
</feature>
<feature type="splice variant" id="VSP_047376" description="In isoform 2." evidence="9">
    <original>GYLMG</original>
    <variation>RSLALLPRLECSGVISAHYKLCLPGAI</variation>
    <location>
        <begin position="145"/>
        <end position="149"/>
    </location>
</feature>
<feature type="sequence variant" id="VAR_039231" description="In a breast cancer sample; somatic mutation." evidence="2">
    <original>F</original>
    <variation>L</variation>
    <location>
        <position position="9"/>
    </location>
</feature>
<feature type="sequence conflict" description="In Ref. 2; AAF65186." evidence="10" ref="2">
    <original>L</original>
    <variation>P</variation>
    <location>
        <position position="119"/>
    </location>
</feature>
<feature type="turn" evidence="15">
    <location>
        <begin position="29"/>
        <end position="31"/>
    </location>
</feature>
<feature type="helix" evidence="15">
    <location>
        <begin position="32"/>
        <end position="45"/>
    </location>
</feature>
<feature type="helix" evidence="15">
    <location>
        <begin position="48"/>
        <end position="53"/>
    </location>
</feature>
<feature type="helix" evidence="15">
    <location>
        <begin position="84"/>
        <end position="107"/>
    </location>
</feature>
<feature type="helix" evidence="15">
    <location>
        <begin position="114"/>
        <end position="142"/>
    </location>
</feature>
<evidence type="ECO:0000255" key="1"/>
<evidence type="ECO:0000269" key="2">
    <source>
    </source>
</evidence>
<evidence type="ECO:0000269" key="3">
    <source>
    </source>
</evidence>
<evidence type="ECO:0000269" key="4">
    <source>
    </source>
</evidence>
<evidence type="ECO:0000269" key="5">
    <source>
    </source>
</evidence>
<evidence type="ECO:0000269" key="6">
    <source>
    </source>
</evidence>
<evidence type="ECO:0000269" key="7">
    <source>
    </source>
</evidence>
<evidence type="ECO:0000269" key="8">
    <source>
    </source>
</evidence>
<evidence type="ECO:0000303" key="9">
    <source>
    </source>
</evidence>
<evidence type="ECO:0000305" key="10"/>
<evidence type="ECO:0000312" key="11">
    <source>
        <dbReference type="HGNC" id="HGNC:24448"/>
    </source>
</evidence>
<evidence type="ECO:0007744" key="12">
    <source>
        <dbReference type="PDB" id="6S7O"/>
    </source>
</evidence>
<evidence type="ECO:0007744" key="13">
    <source>
        <dbReference type="PDB" id="8B6L"/>
    </source>
</evidence>
<evidence type="ECO:0007744" key="14">
    <source>
        <dbReference type="PDB" id="8PN9"/>
    </source>
</evidence>
<evidence type="ECO:0007829" key="15">
    <source>
        <dbReference type="PDB" id="6S7O"/>
    </source>
</evidence>
<gene>
    <name evidence="11" type="primary">OSTC</name>
    <name type="ORF">DC2</name>
    <name type="ORF">HDCMD45P</name>
    <name type="ORF">HSPC307</name>
</gene>
<accession>Q9NRP0</accession>
<accession>A8MYS2</accession>
<accession>B2R5H1</accession>
<accession>D6RH22</accession>
<accession>Q9P075</accession>
<accession>Q9P1R4</accession>
<protein>
    <recommendedName>
        <fullName evidence="10">Oligosaccharyltransferase complex subunit OSTC</fullName>
    </recommendedName>
    <alternativeName>
        <fullName>Hydrophobic protein HSF-28</fullName>
    </alternativeName>
</protein>
<keyword id="KW-0002">3D-structure</keyword>
<keyword id="KW-0025">Alternative splicing</keyword>
<keyword id="KW-0256">Endoplasmic reticulum</keyword>
<keyword id="KW-0472">Membrane</keyword>
<keyword id="KW-1267">Proteomics identification</keyword>
<keyword id="KW-1185">Reference proteome</keyword>
<keyword id="KW-0812">Transmembrane</keyword>
<keyword id="KW-1133">Transmembrane helix</keyword>